<organism>
    <name type="scientific">Marinomonas sp. (strain MWYL1)</name>
    <dbReference type="NCBI Taxonomy" id="400668"/>
    <lineage>
        <taxon>Bacteria</taxon>
        <taxon>Pseudomonadati</taxon>
        <taxon>Pseudomonadota</taxon>
        <taxon>Gammaproteobacteria</taxon>
        <taxon>Oceanospirillales</taxon>
        <taxon>Oceanospirillaceae</taxon>
        <taxon>Marinomonas</taxon>
    </lineage>
</organism>
<protein>
    <recommendedName>
        <fullName evidence="1">Large ribosomal subunit protein bL19</fullName>
    </recommendedName>
    <alternativeName>
        <fullName evidence="2">50S ribosomal protein L19</fullName>
    </alternativeName>
</protein>
<dbReference type="EMBL" id="CP000749">
    <property type="protein sequence ID" value="ABR72668.1"/>
    <property type="molecule type" value="Genomic_DNA"/>
</dbReference>
<dbReference type="SMR" id="A6W1T9"/>
<dbReference type="STRING" id="400668.Mmwyl1_3767"/>
<dbReference type="KEGG" id="mmw:Mmwyl1_3767"/>
<dbReference type="eggNOG" id="COG0335">
    <property type="taxonomic scope" value="Bacteria"/>
</dbReference>
<dbReference type="HOGENOM" id="CLU_103507_2_2_6"/>
<dbReference type="OrthoDB" id="9803541at2"/>
<dbReference type="GO" id="GO:0022625">
    <property type="term" value="C:cytosolic large ribosomal subunit"/>
    <property type="evidence" value="ECO:0007669"/>
    <property type="project" value="TreeGrafter"/>
</dbReference>
<dbReference type="GO" id="GO:0003735">
    <property type="term" value="F:structural constituent of ribosome"/>
    <property type="evidence" value="ECO:0007669"/>
    <property type="project" value="InterPro"/>
</dbReference>
<dbReference type="GO" id="GO:0006412">
    <property type="term" value="P:translation"/>
    <property type="evidence" value="ECO:0007669"/>
    <property type="project" value="UniProtKB-UniRule"/>
</dbReference>
<dbReference type="FunFam" id="2.30.30.790:FF:000001">
    <property type="entry name" value="50S ribosomal protein L19"/>
    <property type="match status" value="1"/>
</dbReference>
<dbReference type="Gene3D" id="2.30.30.790">
    <property type="match status" value="1"/>
</dbReference>
<dbReference type="HAMAP" id="MF_00402">
    <property type="entry name" value="Ribosomal_bL19"/>
    <property type="match status" value="1"/>
</dbReference>
<dbReference type="InterPro" id="IPR001857">
    <property type="entry name" value="Ribosomal_bL19"/>
</dbReference>
<dbReference type="InterPro" id="IPR018257">
    <property type="entry name" value="Ribosomal_bL19_CS"/>
</dbReference>
<dbReference type="InterPro" id="IPR038657">
    <property type="entry name" value="Ribosomal_bL19_sf"/>
</dbReference>
<dbReference type="InterPro" id="IPR008991">
    <property type="entry name" value="Translation_prot_SH3-like_sf"/>
</dbReference>
<dbReference type="NCBIfam" id="TIGR01024">
    <property type="entry name" value="rplS_bact"/>
    <property type="match status" value="1"/>
</dbReference>
<dbReference type="PANTHER" id="PTHR15680:SF9">
    <property type="entry name" value="LARGE RIBOSOMAL SUBUNIT PROTEIN BL19M"/>
    <property type="match status" value="1"/>
</dbReference>
<dbReference type="PANTHER" id="PTHR15680">
    <property type="entry name" value="RIBOSOMAL PROTEIN L19"/>
    <property type="match status" value="1"/>
</dbReference>
<dbReference type="Pfam" id="PF01245">
    <property type="entry name" value="Ribosomal_L19"/>
    <property type="match status" value="1"/>
</dbReference>
<dbReference type="PIRSF" id="PIRSF002191">
    <property type="entry name" value="Ribosomal_L19"/>
    <property type="match status" value="1"/>
</dbReference>
<dbReference type="PRINTS" id="PR00061">
    <property type="entry name" value="RIBOSOMALL19"/>
</dbReference>
<dbReference type="SUPFAM" id="SSF50104">
    <property type="entry name" value="Translation proteins SH3-like domain"/>
    <property type="match status" value="1"/>
</dbReference>
<dbReference type="PROSITE" id="PS01015">
    <property type="entry name" value="RIBOSOMAL_L19"/>
    <property type="match status" value="1"/>
</dbReference>
<comment type="function">
    <text evidence="1">This protein is located at the 30S-50S ribosomal subunit interface and may play a role in the structure and function of the aminoacyl-tRNA binding site.</text>
</comment>
<comment type="similarity">
    <text evidence="1">Belongs to the bacterial ribosomal protein bL19 family.</text>
</comment>
<name>RL19_MARMS</name>
<feature type="chain" id="PRO_1000080357" description="Large ribosomal subunit protein bL19">
    <location>
        <begin position="1"/>
        <end position="120"/>
    </location>
</feature>
<evidence type="ECO:0000255" key="1">
    <source>
        <dbReference type="HAMAP-Rule" id="MF_00402"/>
    </source>
</evidence>
<evidence type="ECO:0000305" key="2"/>
<sequence>MSNKTKLIQQIEAEQMTKEVPAFGPGDTIVVQVKVKEGSRERLQAYEGIVISKRNRGLNSAFTVRKISSGIGVERAFQTYSPLVESIEVKRRGDVRQAKIYYLRERSGKSARIKEKLAKR</sequence>
<gene>
    <name evidence="1" type="primary">rplS</name>
    <name type="ordered locus">Mmwyl1_3767</name>
</gene>
<keyword id="KW-0687">Ribonucleoprotein</keyword>
<keyword id="KW-0689">Ribosomal protein</keyword>
<reference key="1">
    <citation type="submission" date="2007-06" db="EMBL/GenBank/DDBJ databases">
        <title>Complete sequence of Marinomonas sp. MWYL1.</title>
        <authorList>
            <consortium name="US DOE Joint Genome Institute"/>
            <person name="Copeland A."/>
            <person name="Lucas S."/>
            <person name="Lapidus A."/>
            <person name="Barry K."/>
            <person name="Glavina del Rio T."/>
            <person name="Dalin E."/>
            <person name="Tice H."/>
            <person name="Pitluck S."/>
            <person name="Kiss H."/>
            <person name="Brettin T."/>
            <person name="Bruce D."/>
            <person name="Detter J.C."/>
            <person name="Han C."/>
            <person name="Schmutz J."/>
            <person name="Larimer F."/>
            <person name="Land M."/>
            <person name="Hauser L."/>
            <person name="Kyrpides N."/>
            <person name="Kim E."/>
            <person name="Johnston A.W.B."/>
            <person name="Todd J.D."/>
            <person name="Rogers R."/>
            <person name="Wexler M."/>
            <person name="Bond P.L."/>
            <person name="Li Y."/>
            <person name="Richardson P."/>
        </authorList>
    </citation>
    <scope>NUCLEOTIDE SEQUENCE [LARGE SCALE GENOMIC DNA]</scope>
    <source>
        <strain>MWYL1</strain>
    </source>
</reference>
<accession>A6W1T9</accession>
<proteinExistence type="inferred from homology"/>